<name>DESI1_RAT</name>
<proteinExistence type="evidence at transcript level"/>
<organism>
    <name type="scientific">Rattus norvegicus</name>
    <name type="common">Rat</name>
    <dbReference type="NCBI Taxonomy" id="10116"/>
    <lineage>
        <taxon>Eukaryota</taxon>
        <taxon>Metazoa</taxon>
        <taxon>Chordata</taxon>
        <taxon>Craniata</taxon>
        <taxon>Vertebrata</taxon>
        <taxon>Euteleostomi</taxon>
        <taxon>Mammalia</taxon>
        <taxon>Eutheria</taxon>
        <taxon>Euarchontoglires</taxon>
        <taxon>Glires</taxon>
        <taxon>Rodentia</taxon>
        <taxon>Myomorpha</taxon>
        <taxon>Muroidea</taxon>
        <taxon>Muridae</taxon>
        <taxon>Murinae</taxon>
        <taxon>Rattus</taxon>
    </lineage>
</organism>
<comment type="function">
    <text evidence="1 2">Protease which deconjugates SUMO1, SUMO2 and SUMO3 from some substrate proteins. Has isopeptidase but not SUMO-processing activity. Desumoylates ZBTB46 (By similarity). Collaborates with UBQLN4 in the export of ubiquitinated proteins from the nucleus to the cytoplasm (By similarity). Exhibits palmitoyl protein thioesterase (S-depalmitoylation) activity towards synthetic substrates 4-methylumbelliferyl-6-S-palmitoyl-beta-D-glucopyranoside and S-depalmitoylation probe 5 (DPP-5) (By similarity).</text>
</comment>
<comment type="catalytic activity">
    <reaction evidence="1">
        <text>S-hexadecanoyl-L-cysteinyl-[protein] + H2O = L-cysteinyl-[protein] + hexadecanoate + H(+)</text>
        <dbReference type="Rhea" id="RHEA:19233"/>
        <dbReference type="Rhea" id="RHEA-COMP:10131"/>
        <dbReference type="Rhea" id="RHEA-COMP:11032"/>
        <dbReference type="ChEBI" id="CHEBI:7896"/>
        <dbReference type="ChEBI" id="CHEBI:15377"/>
        <dbReference type="ChEBI" id="CHEBI:15378"/>
        <dbReference type="ChEBI" id="CHEBI:29950"/>
        <dbReference type="ChEBI" id="CHEBI:74151"/>
        <dbReference type="EC" id="3.1.2.22"/>
    </reaction>
    <physiologicalReaction direction="left-to-right" evidence="1">
        <dbReference type="Rhea" id="RHEA:19234"/>
    </physiologicalReaction>
</comment>
<comment type="subunit">
    <text evidence="1 2">Homodimer (By similarity). Interacts with UBQLN4; leading to the export of UBQLN4 from the nucleus (By similarity).</text>
</comment>
<comment type="subcellular location">
    <subcellularLocation>
        <location evidence="1">Cytoplasm</location>
    </subcellularLocation>
    <subcellularLocation>
        <location evidence="1">Nucleus</location>
    </subcellularLocation>
    <text evidence="1">Shuttles between the nucleus and the cytoplasm; exported from the nucleus in a XPO1/CRM1-dependent manner via its nuclear export signal motifs.</text>
</comment>
<comment type="similarity">
    <text evidence="4">Belongs to the DeSI family.</text>
</comment>
<dbReference type="EC" id="3.4.-.-"/>
<dbReference type="EC" id="3.1.2.22" evidence="1"/>
<dbReference type="EMBL" id="BC098857">
    <property type="protein sequence ID" value="AAH98857.1"/>
    <property type="molecule type" value="mRNA"/>
</dbReference>
<dbReference type="RefSeq" id="NP_001020874.1">
    <property type="nucleotide sequence ID" value="NM_001025703.1"/>
</dbReference>
<dbReference type="SMR" id="Q4KM30"/>
<dbReference type="FunCoup" id="Q4KM30">
    <property type="interactions" value="745"/>
</dbReference>
<dbReference type="STRING" id="10116.ENSRNOP00000007424"/>
<dbReference type="MEROPS" id="C97.001"/>
<dbReference type="PhosphoSitePlus" id="Q4KM30"/>
<dbReference type="PaxDb" id="10116-ENSRNOP00000007424"/>
<dbReference type="GeneID" id="315160"/>
<dbReference type="KEGG" id="rno:315160"/>
<dbReference type="AGR" id="RGD:1305776"/>
<dbReference type="CTD" id="27351"/>
<dbReference type="RGD" id="1305776">
    <property type="gene designation" value="Desi1"/>
</dbReference>
<dbReference type="VEuPathDB" id="HostDB:ENSRNOG00000005577"/>
<dbReference type="eggNOG" id="KOG0324">
    <property type="taxonomic scope" value="Eukaryota"/>
</dbReference>
<dbReference type="HOGENOM" id="CLU_101028_0_0_1"/>
<dbReference type="InParanoid" id="Q4KM30"/>
<dbReference type="OrthoDB" id="21221at2759"/>
<dbReference type="PhylomeDB" id="Q4KM30"/>
<dbReference type="PRO" id="PR:Q4KM30"/>
<dbReference type="Proteomes" id="UP000002494">
    <property type="component" value="Chromosome 7"/>
</dbReference>
<dbReference type="Bgee" id="ENSRNOG00000005577">
    <property type="expression patterns" value="Expressed in testis and 19 other cell types or tissues"/>
</dbReference>
<dbReference type="GO" id="GO:0005829">
    <property type="term" value="C:cytosol"/>
    <property type="evidence" value="ECO:0000266"/>
    <property type="project" value="RGD"/>
</dbReference>
<dbReference type="GO" id="GO:0005634">
    <property type="term" value="C:nucleus"/>
    <property type="evidence" value="ECO:0007669"/>
    <property type="project" value="UniProtKB-SubCell"/>
</dbReference>
<dbReference type="GO" id="GO:0032991">
    <property type="term" value="C:protein-containing complex"/>
    <property type="evidence" value="ECO:0000266"/>
    <property type="project" value="RGD"/>
</dbReference>
<dbReference type="GO" id="GO:0016929">
    <property type="term" value="F:deSUMOylase activity"/>
    <property type="evidence" value="ECO:0000266"/>
    <property type="project" value="RGD"/>
</dbReference>
<dbReference type="GO" id="GO:0042802">
    <property type="term" value="F:identical protein binding"/>
    <property type="evidence" value="ECO:0000266"/>
    <property type="project" value="RGD"/>
</dbReference>
<dbReference type="GO" id="GO:0061676">
    <property type="term" value="F:importin-alpha family protein binding"/>
    <property type="evidence" value="ECO:0000266"/>
    <property type="project" value="RGD"/>
</dbReference>
<dbReference type="GO" id="GO:0052816">
    <property type="term" value="F:long-chain fatty acyl-CoA hydrolase activity"/>
    <property type="evidence" value="ECO:0000250"/>
    <property type="project" value="UniProtKB"/>
</dbReference>
<dbReference type="GO" id="GO:0008474">
    <property type="term" value="F:palmitoyl-(protein) hydrolase activity"/>
    <property type="evidence" value="ECO:0007669"/>
    <property type="project" value="RHEA"/>
</dbReference>
<dbReference type="GO" id="GO:0016926">
    <property type="term" value="P:protein desumoylation"/>
    <property type="evidence" value="ECO:0000266"/>
    <property type="project" value="RGD"/>
</dbReference>
<dbReference type="GO" id="GO:0006611">
    <property type="term" value="P:protein export from nucleus"/>
    <property type="evidence" value="ECO:0000266"/>
    <property type="project" value="RGD"/>
</dbReference>
<dbReference type="GO" id="GO:0006508">
    <property type="term" value="P:proteolysis"/>
    <property type="evidence" value="ECO:0007669"/>
    <property type="project" value="UniProtKB-KW"/>
</dbReference>
<dbReference type="GO" id="GO:0032434">
    <property type="term" value="P:regulation of proteasomal ubiquitin-dependent protein catabolic process"/>
    <property type="evidence" value="ECO:0000266"/>
    <property type="project" value="RGD"/>
</dbReference>
<dbReference type="FunFam" id="3.90.1720.30:FF:000002">
    <property type="entry name" value="Desumoylating isopeptidase 1"/>
    <property type="match status" value="1"/>
</dbReference>
<dbReference type="Gene3D" id="3.90.1720.30">
    <property type="entry name" value="PPPDE domains"/>
    <property type="match status" value="1"/>
</dbReference>
<dbReference type="InterPro" id="IPR008580">
    <property type="entry name" value="PPPDE_dom"/>
</dbReference>
<dbReference type="InterPro" id="IPR042266">
    <property type="entry name" value="PPPDE_sf"/>
</dbReference>
<dbReference type="PANTHER" id="PTHR12378">
    <property type="entry name" value="DESUMOYLATING ISOPEPTIDASE"/>
    <property type="match status" value="1"/>
</dbReference>
<dbReference type="PANTHER" id="PTHR12378:SF7">
    <property type="entry name" value="DESUMOYLATING ISOPEPTIDASE 1"/>
    <property type="match status" value="1"/>
</dbReference>
<dbReference type="Pfam" id="PF05903">
    <property type="entry name" value="Peptidase_C97"/>
    <property type="match status" value="1"/>
</dbReference>
<dbReference type="SMART" id="SM01179">
    <property type="entry name" value="DUF862"/>
    <property type="match status" value="1"/>
</dbReference>
<dbReference type="PROSITE" id="PS51858">
    <property type="entry name" value="PPPDE"/>
    <property type="match status" value="1"/>
</dbReference>
<reference key="1">
    <citation type="journal article" date="2004" name="Genome Res.">
        <title>The status, quality, and expansion of the NIH full-length cDNA project: the Mammalian Gene Collection (MGC).</title>
        <authorList>
            <consortium name="The MGC Project Team"/>
        </authorList>
    </citation>
    <scope>NUCLEOTIDE SEQUENCE [LARGE SCALE MRNA]</scope>
    <source>
        <tissue>Thymus</tissue>
    </source>
</reference>
<protein>
    <recommendedName>
        <fullName>Desumoylating isopeptidase 1</fullName>
        <shortName>DeSI-1</shortName>
        <ecNumber>3.4.-.-</ecNumber>
    </recommendedName>
    <alternativeName>
        <fullName>PPPDE peptidase domain-containing protein 2</fullName>
    </alternativeName>
    <alternativeName>
        <fullName>Palmitoyl protein thioesterase DESI1</fullName>
        <ecNumber evidence="1">3.1.2.22</ecNumber>
    </alternativeName>
    <alternativeName>
        <fullName>S-depalmitoylase DESI1</fullName>
    </alternativeName>
</protein>
<accession>Q4KM30</accession>
<keyword id="KW-0963">Cytoplasm</keyword>
<keyword id="KW-0378">Hydrolase</keyword>
<keyword id="KW-0539">Nucleus</keyword>
<keyword id="KW-0645">Protease</keyword>
<keyword id="KW-1185">Reference proteome</keyword>
<sequence>MEPPNLYPVKLYVYDLSKGLARRLSPIMLGKQLEGIWHTSIVVHKDEFFFGSSGISSCTPGGTLLGPPDSVVDVGNTEVTEEIFLEYLSSLGESLFRGEAYNLFEHNCNTFSNEVAQFLTGRKIPSYITDLPSEVLSTPFGQALRPFLDSIQIQPPGGNSVGRPNGQS</sequence>
<evidence type="ECO:0000250" key="1">
    <source>
        <dbReference type="UniProtKB" id="Q6ICB0"/>
    </source>
</evidence>
<evidence type="ECO:0000250" key="2">
    <source>
        <dbReference type="UniProtKB" id="Q9CQT7"/>
    </source>
</evidence>
<evidence type="ECO:0000255" key="3">
    <source>
        <dbReference type="PROSITE-ProRule" id="PRU01205"/>
    </source>
</evidence>
<evidence type="ECO:0000305" key="4"/>
<feature type="chain" id="PRO_0000318152" description="Desumoylating isopeptidase 1">
    <location>
        <begin position="1"/>
        <end position="168"/>
    </location>
</feature>
<feature type="domain" description="PPPDE" evidence="3">
    <location>
        <begin position="7"/>
        <end position="149"/>
    </location>
</feature>
<feature type="short sequence motif" description="Nuclear export signal 1" evidence="1">
    <location>
        <begin position="83"/>
        <end position="91"/>
    </location>
</feature>
<feature type="short sequence motif" description="Nuclear export signal 2" evidence="1">
    <location>
        <begin position="139"/>
        <end position="153"/>
    </location>
</feature>
<feature type="active site" evidence="3">
    <location>
        <position position="38"/>
    </location>
</feature>
<feature type="active site" evidence="3">
    <location>
        <position position="108"/>
    </location>
</feature>
<gene>
    <name type="primary">Desi1</name>
    <name type="synonym">Fam152b</name>
    <name type="synonym">Pppde2</name>
</gene>